<sequence>MQLLTLPTLIFIFLNYGTPCLSLRILVYSPRMIPSHVAFVANIANLLGQRGHNVVVVDNVLRSDISNKLDLKVIEKVVKVETSANVAKLLADQSIPINFWSMRNEPEEQKKVMKQLGIIFLEQCKYLVSKEETVFNELKHLEFDFGIHEVFDICGIGIFEKLGIRKSVILSSTGMRDIVNEALGISSQLQDASILSDYGNSIPFYGIRRNLKFHSAWRNFFEVQSKTLEPLFETTSSFENLLRFSNLMFLNTHELADAHRPWSRRVHEIGGISFKFPMPLKNEYINLFNKYNSIILVSFGTTTPSFLMPEKYKNTLINTFQRFPDFLFIWKYEKDDEFTQKNKKGNVVFKKFLPQVDLLESRKIKLFITHGGQNSLLETFHSNTRTLITPLFGDQHRNAQIALENGLSHVLLKDQLANEELVYAAIKQGTESNKKLDDNLLKLSSNLKNAKQTSENLFLDTVESTYTDNLSPLNFEFYPKLYSSDQILLYLDSIAMFTLTLLTMILIRKFLL</sequence>
<proteinExistence type="inferred from homology"/>
<reference key="1">
    <citation type="journal article" date="1998" name="Science">
        <title>Genome sequence of the nematode C. elegans: a platform for investigating biology.</title>
        <authorList>
            <consortium name="The C. elegans sequencing consortium"/>
        </authorList>
    </citation>
    <scope>NUCLEOTIDE SEQUENCE [LARGE SCALE GENOMIC DNA]</scope>
    <source>
        <strain>Bristol N2</strain>
    </source>
</reference>
<comment type="catalytic activity">
    <reaction>
        <text>glucuronate acceptor + UDP-alpha-D-glucuronate = acceptor beta-D-glucuronoside + UDP + H(+)</text>
        <dbReference type="Rhea" id="RHEA:21032"/>
        <dbReference type="ChEBI" id="CHEBI:15378"/>
        <dbReference type="ChEBI" id="CHEBI:58052"/>
        <dbReference type="ChEBI" id="CHEBI:58223"/>
        <dbReference type="ChEBI" id="CHEBI:132367"/>
        <dbReference type="ChEBI" id="CHEBI:132368"/>
        <dbReference type="EC" id="2.4.1.17"/>
    </reaction>
</comment>
<comment type="subcellular location">
    <subcellularLocation>
        <location evidence="2">Membrane</location>
        <topology evidence="2">Single-pass membrane protein</topology>
    </subcellularLocation>
</comment>
<comment type="similarity">
    <text evidence="2">Belongs to the UDP-glycosyltransferase family.</text>
</comment>
<feature type="signal peptide" evidence="1">
    <location>
        <begin position="1"/>
        <end position="22"/>
    </location>
</feature>
<feature type="chain" id="PRO_0000036051" description="Putative UDP-glucuronosyltransferase ugt-55">
    <location>
        <begin position="23"/>
        <end position="512"/>
    </location>
</feature>
<feature type="transmembrane region" description="Helical" evidence="1">
    <location>
        <begin position="487"/>
        <end position="507"/>
    </location>
</feature>
<organism>
    <name type="scientific">Caenorhabditis elegans</name>
    <dbReference type="NCBI Taxonomy" id="6239"/>
    <lineage>
        <taxon>Eukaryota</taxon>
        <taxon>Metazoa</taxon>
        <taxon>Ecdysozoa</taxon>
        <taxon>Nematoda</taxon>
        <taxon>Chromadorea</taxon>
        <taxon>Rhabditida</taxon>
        <taxon>Rhabditina</taxon>
        <taxon>Rhabditomorpha</taxon>
        <taxon>Rhabditoidea</taxon>
        <taxon>Rhabditidae</taxon>
        <taxon>Peloderinae</taxon>
        <taxon>Caenorhabditis</taxon>
    </lineage>
</organism>
<gene>
    <name type="primary">ugt-55</name>
    <name type="synonym">ugt11</name>
    <name type="ORF">T04H1.7</name>
</gene>
<dbReference type="EC" id="2.4.1.17"/>
<dbReference type="EMBL" id="Z78200">
    <property type="protein sequence ID" value="CAB01584.2"/>
    <property type="molecule type" value="Genomic_DNA"/>
</dbReference>
<dbReference type="PIR" id="T24477">
    <property type="entry name" value="T24477"/>
</dbReference>
<dbReference type="RefSeq" id="NP_506073.2">
    <property type="nucleotide sequence ID" value="NM_073672.4"/>
</dbReference>
<dbReference type="SMR" id="Q22180"/>
<dbReference type="FunCoup" id="Q22180">
    <property type="interactions" value="173"/>
</dbReference>
<dbReference type="STRING" id="6239.T04H1.7.1"/>
<dbReference type="CAZy" id="GT1">
    <property type="family name" value="Glycosyltransferase Family 1"/>
</dbReference>
<dbReference type="PaxDb" id="6239-T04H1.7"/>
<dbReference type="EnsemblMetazoa" id="T04H1.7.1">
    <property type="protein sequence ID" value="T04H1.7.1"/>
    <property type="gene ID" value="WBGene00011452"/>
</dbReference>
<dbReference type="GeneID" id="188072"/>
<dbReference type="KEGG" id="cel:CELE_T04H1.7"/>
<dbReference type="UCSC" id="T04H1.7">
    <property type="organism name" value="c. elegans"/>
</dbReference>
<dbReference type="AGR" id="WB:WBGene00011452"/>
<dbReference type="CTD" id="188072"/>
<dbReference type="WormBase" id="T04H1.7">
    <property type="protein sequence ID" value="CE31984"/>
    <property type="gene ID" value="WBGene00011452"/>
    <property type="gene designation" value="ugt-55"/>
</dbReference>
<dbReference type="eggNOG" id="KOG1192">
    <property type="taxonomic scope" value="Eukaryota"/>
</dbReference>
<dbReference type="GeneTree" id="ENSGT00970000196326"/>
<dbReference type="HOGENOM" id="CLU_012949_1_2_1"/>
<dbReference type="InParanoid" id="Q22180"/>
<dbReference type="OMA" id="YSPRMIP"/>
<dbReference type="OrthoDB" id="5818197at2759"/>
<dbReference type="PhylomeDB" id="Q22180"/>
<dbReference type="PRO" id="PR:Q22180"/>
<dbReference type="Proteomes" id="UP000001940">
    <property type="component" value="Chromosome V"/>
</dbReference>
<dbReference type="Bgee" id="WBGene00011452">
    <property type="expression patterns" value="Expressed in larva and 1 other cell type or tissue"/>
</dbReference>
<dbReference type="GO" id="GO:0016020">
    <property type="term" value="C:membrane"/>
    <property type="evidence" value="ECO:0007669"/>
    <property type="project" value="UniProtKB-SubCell"/>
</dbReference>
<dbReference type="GO" id="GO:0015020">
    <property type="term" value="F:glucuronosyltransferase activity"/>
    <property type="evidence" value="ECO:0007669"/>
    <property type="project" value="UniProtKB-EC"/>
</dbReference>
<dbReference type="GO" id="GO:0008194">
    <property type="term" value="F:UDP-glycosyltransferase activity"/>
    <property type="evidence" value="ECO:0000318"/>
    <property type="project" value="GO_Central"/>
</dbReference>
<dbReference type="CDD" id="cd03784">
    <property type="entry name" value="GT1_Gtf-like"/>
    <property type="match status" value="1"/>
</dbReference>
<dbReference type="FunFam" id="3.40.50.2000:FF:000038">
    <property type="entry name" value="UDP-GlucuronosylTransferase"/>
    <property type="match status" value="1"/>
</dbReference>
<dbReference type="Gene3D" id="3.40.50.2000">
    <property type="entry name" value="Glycogen Phosphorylase B"/>
    <property type="match status" value="1"/>
</dbReference>
<dbReference type="InterPro" id="IPR050271">
    <property type="entry name" value="UDP-glycosyltransferase"/>
</dbReference>
<dbReference type="InterPro" id="IPR002213">
    <property type="entry name" value="UDP_glucos_trans"/>
</dbReference>
<dbReference type="InterPro" id="IPR035595">
    <property type="entry name" value="UDP_glycos_trans_CS"/>
</dbReference>
<dbReference type="PANTHER" id="PTHR48043">
    <property type="entry name" value="EG:EG0003.4 PROTEIN-RELATED"/>
    <property type="match status" value="1"/>
</dbReference>
<dbReference type="PANTHER" id="PTHR48043:SF34">
    <property type="entry name" value="UDP-GLUCURONOSYLTRANSFERASE UGT-55-RELATED"/>
    <property type="match status" value="1"/>
</dbReference>
<dbReference type="Pfam" id="PF00201">
    <property type="entry name" value="UDPGT"/>
    <property type="match status" value="1"/>
</dbReference>
<dbReference type="SUPFAM" id="SSF53756">
    <property type="entry name" value="UDP-Glycosyltransferase/glycogen phosphorylase"/>
    <property type="match status" value="1"/>
</dbReference>
<dbReference type="PROSITE" id="PS00375">
    <property type="entry name" value="UDPGT"/>
    <property type="match status" value="1"/>
</dbReference>
<protein>
    <recommendedName>
        <fullName>Putative UDP-glucuronosyltransferase ugt-55</fullName>
        <shortName>UDPGT 55</shortName>
        <ecNumber>2.4.1.17</ecNumber>
    </recommendedName>
</protein>
<evidence type="ECO:0000255" key="1"/>
<evidence type="ECO:0000305" key="2"/>
<name>UGT55_CAEEL</name>
<accession>Q22180</accession>
<keyword id="KW-0328">Glycosyltransferase</keyword>
<keyword id="KW-0472">Membrane</keyword>
<keyword id="KW-1185">Reference proteome</keyword>
<keyword id="KW-0732">Signal</keyword>
<keyword id="KW-0808">Transferase</keyword>
<keyword id="KW-0812">Transmembrane</keyword>
<keyword id="KW-1133">Transmembrane helix</keyword>